<feature type="chain" id="PRO_0000101888" description="UDP-N-acetylmuramoyl-L-alanyl-D-glutamate--2,6-diaminopimelate ligase">
    <location>
        <begin position="1"/>
        <end position="485"/>
    </location>
</feature>
<feature type="short sequence motif" description="Meso-diaminopimelate recognition motif">
    <location>
        <begin position="405"/>
        <end position="408"/>
    </location>
</feature>
<feature type="binding site" evidence="1">
    <location>
        <position position="30"/>
    </location>
    <ligand>
        <name>UDP-N-acetyl-alpha-D-muramoyl-L-alanyl-D-glutamate</name>
        <dbReference type="ChEBI" id="CHEBI:83900"/>
    </ligand>
</feature>
<feature type="binding site" evidence="1">
    <location>
        <begin position="113"/>
        <end position="119"/>
    </location>
    <ligand>
        <name>ATP</name>
        <dbReference type="ChEBI" id="CHEBI:30616"/>
    </ligand>
</feature>
<feature type="binding site" evidence="1">
    <location>
        <begin position="155"/>
        <end position="156"/>
    </location>
    <ligand>
        <name>UDP-N-acetyl-alpha-D-muramoyl-L-alanyl-D-glutamate</name>
        <dbReference type="ChEBI" id="CHEBI:83900"/>
    </ligand>
</feature>
<feature type="binding site" evidence="1">
    <location>
        <position position="182"/>
    </location>
    <ligand>
        <name>UDP-N-acetyl-alpha-D-muramoyl-L-alanyl-D-glutamate</name>
        <dbReference type="ChEBI" id="CHEBI:83900"/>
    </ligand>
</feature>
<feature type="binding site" evidence="1">
    <location>
        <position position="190"/>
    </location>
    <ligand>
        <name>UDP-N-acetyl-alpha-D-muramoyl-L-alanyl-D-glutamate</name>
        <dbReference type="ChEBI" id="CHEBI:83900"/>
    </ligand>
</feature>
<feature type="binding site" evidence="1">
    <location>
        <position position="381"/>
    </location>
    <ligand>
        <name>meso-2,6-diaminopimelate</name>
        <dbReference type="ChEBI" id="CHEBI:57791"/>
    </ligand>
</feature>
<feature type="binding site" evidence="1">
    <location>
        <begin position="405"/>
        <end position="408"/>
    </location>
    <ligand>
        <name>meso-2,6-diaminopimelate</name>
        <dbReference type="ChEBI" id="CHEBI:57791"/>
    </ligand>
</feature>
<feature type="binding site" evidence="1">
    <location>
        <position position="455"/>
    </location>
    <ligand>
        <name>meso-2,6-diaminopimelate</name>
        <dbReference type="ChEBI" id="CHEBI:57791"/>
    </ligand>
</feature>
<feature type="binding site" evidence="1">
    <location>
        <position position="459"/>
    </location>
    <ligand>
        <name>meso-2,6-diaminopimelate</name>
        <dbReference type="ChEBI" id="CHEBI:57791"/>
    </ligand>
</feature>
<feature type="modified residue" description="N6-carboxylysine" evidence="1">
    <location>
        <position position="222"/>
    </location>
</feature>
<accession>Q894B7</accession>
<name>MURE_CLOTE</name>
<keyword id="KW-0067">ATP-binding</keyword>
<keyword id="KW-0131">Cell cycle</keyword>
<keyword id="KW-0132">Cell division</keyword>
<keyword id="KW-0133">Cell shape</keyword>
<keyword id="KW-0961">Cell wall biogenesis/degradation</keyword>
<keyword id="KW-0963">Cytoplasm</keyword>
<keyword id="KW-0436">Ligase</keyword>
<keyword id="KW-0460">Magnesium</keyword>
<keyword id="KW-0547">Nucleotide-binding</keyword>
<keyword id="KW-0573">Peptidoglycan synthesis</keyword>
<keyword id="KW-1185">Reference proteome</keyword>
<sequence>MKLKEVLKKLEYNILNGNIEIDIENIQYDSRNIKKNDIFFAIQGYSTDGHKFIESAIEKGAKVIVFDKGFENENMYKDITFIKVKNSRKALAVAASNYYGNPKDKLKLIGVTGTNGKTTSTFMIKSILEEAGFKVGLMGTILNYIGDRKIYAQRTTPESLEIHKLFKDMVDSGVDYCVMEVSSHSLYLDRVYGIEFNEGIFTNLTQDHLDFHKTFENYYNSKLMLFKNSINSVINIDDNYGERILKEIEEKTFTYSIKKYSDLKAESVRLHSRGGEFTVDFKGNKEKINIHIPGEYNVSNALGSILACVNEGISLKVIKRGLEKLSGVPGRCEIVTMGYNLGYDVIVDYAHTPDGLDNVLRTARDFTKGKLISVYGCGGDRDRAKRPIMGRIGTELSDLAILTSDNPRTEEPFSIIDDIVKGVTKDNYIIVQSRREAIKKAMTIAKKDDVIVVAGKGHEDYQILKDKTIHFDEREVIKEIIEELY</sequence>
<evidence type="ECO:0000255" key="1">
    <source>
        <dbReference type="HAMAP-Rule" id="MF_00208"/>
    </source>
</evidence>
<reference key="1">
    <citation type="journal article" date="2003" name="Proc. Natl. Acad. Sci. U.S.A.">
        <title>The genome sequence of Clostridium tetani, the causative agent of tetanus disease.</title>
        <authorList>
            <person name="Brueggemann H."/>
            <person name="Baeumer S."/>
            <person name="Fricke W.F."/>
            <person name="Wiezer A."/>
            <person name="Liesegang H."/>
            <person name="Decker I."/>
            <person name="Herzberg C."/>
            <person name="Martinez-Arias R."/>
            <person name="Merkl R."/>
            <person name="Henne A."/>
            <person name="Gottschalk G."/>
        </authorList>
    </citation>
    <scope>NUCLEOTIDE SEQUENCE [LARGE SCALE GENOMIC DNA]</scope>
    <source>
        <strain>Massachusetts / E88</strain>
    </source>
</reference>
<organism>
    <name type="scientific">Clostridium tetani (strain Massachusetts / E88)</name>
    <dbReference type="NCBI Taxonomy" id="212717"/>
    <lineage>
        <taxon>Bacteria</taxon>
        <taxon>Bacillati</taxon>
        <taxon>Bacillota</taxon>
        <taxon>Clostridia</taxon>
        <taxon>Eubacteriales</taxon>
        <taxon>Clostridiaceae</taxon>
        <taxon>Clostridium</taxon>
    </lineage>
</organism>
<comment type="function">
    <text evidence="1">Catalyzes the addition of meso-diaminopimelic acid to the nucleotide precursor UDP-N-acetylmuramoyl-L-alanyl-D-glutamate (UMAG) in the biosynthesis of bacterial cell-wall peptidoglycan.</text>
</comment>
<comment type="catalytic activity">
    <reaction evidence="1">
        <text>UDP-N-acetyl-alpha-D-muramoyl-L-alanyl-D-glutamate + meso-2,6-diaminopimelate + ATP = UDP-N-acetyl-alpha-D-muramoyl-L-alanyl-gamma-D-glutamyl-meso-2,6-diaminopimelate + ADP + phosphate + H(+)</text>
        <dbReference type="Rhea" id="RHEA:23676"/>
        <dbReference type="ChEBI" id="CHEBI:15378"/>
        <dbReference type="ChEBI" id="CHEBI:30616"/>
        <dbReference type="ChEBI" id="CHEBI:43474"/>
        <dbReference type="ChEBI" id="CHEBI:57791"/>
        <dbReference type="ChEBI" id="CHEBI:83900"/>
        <dbReference type="ChEBI" id="CHEBI:83905"/>
        <dbReference type="ChEBI" id="CHEBI:456216"/>
        <dbReference type="EC" id="6.3.2.13"/>
    </reaction>
</comment>
<comment type="cofactor">
    <cofactor evidence="1">
        <name>Mg(2+)</name>
        <dbReference type="ChEBI" id="CHEBI:18420"/>
    </cofactor>
</comment>
<comment type="pathway">
    <text evidence="1">Cell wall biogenesis; peptidoglycan biosynthesis.</text>
</comment>
<comment type="subcellular location">
    <subcellularLocation>
        <location evidence="1">Cytoplasm</location>
    </subcellularLocation>
</comment>
<comment type="PTM">
    <text evidence="1">Carboxylation is probably crucial for Mg(2+) binding and, consequently, for the gamma-phosphate positioning of ATP.</text>
</comment>
<comment type="similarity">
    <text evidence="1">Belongs to the MurCDEF family. MurE subfamily.</text>
</comment>
<gene>
    <name evidence="1" type="primary">murE</name>
    <name type="ordered locus">CTC_01632</name>
</gene>
<proteinExistence type="inferred from homology"/>
<dbReference type="EC" id="6.3.2.13" evidence="1"/>
<dbReference type="EMBL" id="AE015927">
    <property type="protein sequence ID" value="AAO36175.1"/>
    <property type="molecule type" value="Genomic_DNA"/>
</dbReference>
<dbReference type="RefSeq" id="WP_011099835.1">
    <property type="nucleotide sequence ID" value="NC_004557.1"/>
</dbReference>
<dbReference type="SMR" id="Q894B7"/>
<dbReference type="STRING" id="212717.CTC_01632"/>
<dbReference type="GeneID" id="24254195"/>
<dbReference type="KEGG" id="ctc:CTC_01632"/>
<dbReference type="HOGENOM" id="CLU_022291_4_1_9"/>
<dbReference type="OrthoDB" id="9800958at2"/>
<dbReference type="UniPathway" id="UPA00219"/>
<dbReference type="Proteomes" id="UP000001412">
    <property type="component" value="Chromosome"/>
</dbReference>
<dbReference type="GO" id="GO:0005737">
    <property type="term" value="C:cytoplasm"/>
    <property type="evidence" value="ECO:0007669"/>
    <property type="project" value="UniProtKB-SubCell"/>
</dbReference>
<dbReference type="GO" id="GO:0005524">
    <property type="term" value="F:ATP binding"/>
    <property type="evidence" value="ECO:0007669"/>
    <property type="project" value="UniProtKB-UniRule"/>
</dbReference>
<dbReference type="GO" id="GO:0000287">
    <property type="term" value="F:magnesium ion binding"/>
    <property type="evidence" value="ECO:0007669"/>
    <property type="project" value="UniProtKB-UniRule"/>
</dbReference>
<dbReference type="GO" id="GO:0004326">
    <property type="term" value="F:tetrahydrofolylpolyglutamate synthase activity"/>
    <property type="evidence" value="ECO:0007669"/>
    <property type="project" value="InterPro"/>
</dbReference>
<dbReference type="GO" id="GO:0008765">
    <property type="term" value="F:UDP-N-acetylmuramoylalanyl-D-glutamate-2,6-diaminopimelate ligase activity"/>
    <property type="evidence" value="ECO:0007669"/>
    <property type="project" value="UniProtKB-UniRule"/>
</dbReference>
<dbReference type="GO" id="GO:0051301">
    <property type="term" value="P:cell division"/>
    <property type="evidence" value="ECO:0007669"/>
    <property type="project" value="UniProtKB-KW"/>
</dbReference>
<dbReference type="GO" id="GO:0071555">
    <property type="term" value="P:cell wall organization"/>
    <property type="evidence" value="ECO:0007669"/>
    <property type="project" value="UniProtKB-KW"/>
</dbReference>
<dbReference type="GO" id="GO:0009252">
    <property type="term" value="P:peptidoglycan biosynthetic process"/>
    <property type="evidence" value="ECO:0007669"/>
    <property type="project" value="UniProtKB-UniRule"/>
</dbReference>
<dbReference type="GO" id="GO:0008360">
    <property type="term" value="P:regulation of cell shape"/>
    <property type="evidence" value="ECO:0007669"/>
    <property type="project" value="UniProtKB-KW"/>
</dbReference>
<dbReference type="FunFam" id="3.90.190.20:FF:000006">
    <property type="entry name" value="UDP-N-acetylmuramoyl-L-alanyl-D-glutamate--2,6-diaminopimelate ligase"/>
    <property type="match status" value="1"/>
</dbReference>
<dbReference type="Gene3D" id="3.90.190.20">
    <property type="entry name" value="Mur ligase, C-terminal domain"/>
    <property type="match status" value="1"/>
</dbReference>
<dbReference type="Gene3D" id="3.40.1190.10">
    <property type="entry name" value="Mur-like, catalytic domain"/>
    <property type="match status" value="1"/>
</dbReference>
<dbReference type="Gene3D" id="3.40.1390.10">
    <property type="entry name" value="MurE/MurF, N-terminal domain"/>
    <property type="match status" value="1"/>
</dbReference>
<dbReference type="HAMAP" id="MF_00208">
    <property type="entry name" value="MurE"/>
    <property type="match status" value="1"/>
</dbReference>
<dbReference type="InterPro" id="IPR018109">
    <property type="entry name" value="Folylpolyglutamate_synth_CS"/>
</dbReference>
<dbReference type="InterPro" id="IPR036565">
    <property type="entry name" value="Mur-like_cat_sf"/>
</dbReference>
<dbReference type="InterPro" id="IPR004101">
    <property type="entry name" value="Mur_ligase_C"/>
</dbReference>
<dbReference type="InterPro" id="IPR036615">
    <property type="entry name" value="Mur_ligase_C_dom_sf"/>
</dbReference>
<dbReference type="InterPro" id="IPR013221">
    <property type="entry name" value="Mur_ligase_cen"/>
</dbReference>
<dbReference type="InterPro" id="IPR000713">
    <property type="entry name" value="Mur_ligase_N"/>
</dbReference>
<dbReference type="InterPro" id="IPR035911">
    <property type="entry name" value="MurE/MurF_N"/>
</dbReference>
<dbReference type="InterPro" id="IPR005761">
    <property type="entry name" value="UDP-N-AcMur-Glu-dNH2Pim_ligase"/>
</dbReference>
<dbReference type="NCBIfam" id="TIGR01085">
    <property type="entry name" value="murE"/>
    <property type="match status" value="1"/>
</dbReference>
<dbReference type="NCBIfam" id="NF001124">
    <property type="entry name" value="PRK00139.1-2"/>
    <property type="match status" value="1"/>
</dbReference>
<dbReference type="NCBIfam" id="NF001126">
    <property type="entry name" value="PRK00139.1-4"/>
    <property type="match status" value="1"/>
</dbReference>
<dbReference type="PANTHER" id="PTHR23135">
    <property type="entry name" value="MUR LIGASE FAMILY MEMBER"/>
    <property type="match status" value="1"/>
</dbReference>
<dbReference type="PANTHER" id="PTHR23135:SF4">
    <property type="entry name" value="UDP-N-ACETYLMURAMOYL-L-ALANYL-D-GLUTAMATE--2,6-DIAMINOPIMELATE LIGASE MURE HOMOLOG, CHLOROPLASTIC"/>
    <property type="match status" value="1"/>
</dbReference>
<dbReference type="Pfam" id="PF01225">
    <property type="entry name" value="Mur_ligase"/>
    <property type="match status" value="1"/>
</dbReference>
<dbReference type="Pfam" id="PF02875">
    <property type="entry name" value="Mur_ligase_C"/>
    <property type="match status" value="1"/>
</dbReference>
<dbReference type="Pfam" id="PF08245">
    <property type="entry name" value="Mur_ligase_M"/>
    <property type="match status" value="1"/>
</dbReference>
<dbReference type="SUPFAM" id="SSF53623">
    <property type="entry name" value="MurD-like peptide ligases, catalytic domain"/>
    <property type="match status" value="1"/>
</dbReference>
<dbReference type="SUPFAM" id="SSF53244">
    <property type="entry name" value="MurD-like peptide ligases, peptide-binding domain"/>
    <property type="match status" value="1"/>
</dbReference>
<dbReference type="SUPFAM" id="SSF63418">
    <property type="entry name" value="MurE/MurF N-terminal domain"/>
    <property type="match status" value="1"/>
</dbReference>
<protein>
    <recommendedName>
        <fullName evidence="1">UDP-N-acetylmuramoyl-L-alanyl-D-glutamate--2,6-diaminopimelate ligase</fullName>
        <ecNumber evidence="1">6.3.2.13</ecNumber>
    </recommendedName>
    <alternativeName>
        <fullName evidence="1">Meso-A2pm-adding enzyme</fullName>
    </alternativeName>
    <alternativeName>
        <fullName evidence="1">Meso-diaminopimelate-adding enzyme</fullName>
    </alternativeName>
    <alternativeName>
        <fullName evidence="1">UDP-MurNAc-L-Ala-D-Glu:meso-diaminopimelate ligase</fullName>
    </alternativeName>
    <alternativeName>
        <fullName evidence="1">UDP-MurNAc-tripeptide synthetase</fullName>
    </alternativeName>
    <alternativeName>
        <fullName evidence="1">UDP-N-acetylmuramyl-tripeptide synthetase</fullName>
    </alternativeName>
</protein>